<protein>
    <recommendedName>
        <fullName evidence="1">UDP-N-acetylmuramate--L-alanine ligase</fullName>
        <ecNumber evidence="1">6.3.2.8</ecNumber>
    </recommendedName>
    <alternativeName>
        <fullName evidence="1">UDP-N-acetylmuramoyl-L-alanine synthetase</fullName>
    </alternativeName>
</protein>
<comment type="function">
    <text evidence="1">Cell wall formation.</text>
</comment>
<comment type="catalytic activity">
    <reaction evidence="1">
        <text>UDP-N-acetyl-alpha-D-muramate + L-alanine + ATP = UDP-N-acetyl-alpha-D-muramoyl-L-alanine + ADP + phosphate + H(+)</text>
        <dbReference type="Rhea" id="RHEA:23372"/>
        <dbReference type="ChEBI" id="CHEBI:15378"/>
        <dbReference type="ChEBI" id="CHEBI:30616"/>
        <dbReference type="ChEBI" id="CHEBI:43474"/>
        <dbReference type="ChEBI" id="CHEBI:57972"/>
        <dbReference type="ChEBI" id="CHEBI:70757"/>
        <dbReference type="ChEBI" id="CHEBI:83898"/>
        <dbReference type="ChEBI" id="CHEBI:456216"/>
        <dbReference type="EC" id="6.3.2.8"/>
    </reaction>
</comment>
<comment type="pathway">
    <text evidence="1">Cell wall biogenesis; peptidoglycan biosynthesis.</text>
</comment>
<comment type="subcellular location">
    <subcellularLocation>
        <location evidence="1">Cytoplasm</location>
    </subcellularLocation>
</comment>
<comment type="similarity">
    <text evidence="1">Belongs to the MurCDEF family.</text>
</comment>
<accession>A7ZW43</accession>
<dbReference type="EC" id="6.3.2.8" evidence="1"/>
<dbReference type="EMBL" id="CP000802">
    <property type="protein sequence ID" value="ABV04497.1"/>
    <property type="molecule type" value="Genomic_DNA"/>
</dbReference>
<dbReference type="RefSeq" id="WP_001096048.1">
    <property type="nucleotide sequence ID" value="NC_009800.1"/>
</dbReference>
<dbReference type="SMR" id="A7ZW43"/>
<dbReference type="GeneID" id="75169991"/>
<dbReference type="KEGG" id="ecx:EcHS_A0097"/>
<dbReference type="HOGENOM" id="CLU_028104_2_2_6"/>
<dbReference type="UniPathway" id="UPA00219"/>
<dbReference type="GO" id="GO:0005737">
    <property type="term" value="C:cytoplasm"/>
    <property type="evidence" value="ECO:0007669"/>
    <property type="project" value="UniProtKB-SubCell"/>
</dbReference>
<dbReference type="GO" id="GO:0005524">
    <property type="term" value="F:ATP binding"/>
    <property type="evidence" value="ECO:0007669"/>
    <property type="project" value="UniProtKB-UniRule"/>
</dbReference>
<dbReference type="GO" id="GO:0008763">
    <property type="term" value="F:UDP-N-acetylmuramate-L-alanine ligase activity"/>
    <property type="evidence" value="ECO:0007669"/>
    <property type="project" value="UniProtKB-UniRule"/>
</dbReference>
<dbReference type="GO" id="GO:0051301">
    <property type="term" value="P:cell division"/>
    <property type="evidence" value="ECO:0007669"/>
    <property type="project" value="UniProtKB-KW"/>
</dbReference>
<dbReference type="GO" id="GO:0071555">
    <property type="term" value="P:cell wall organization"/>
    <property type="evidence" value="ECO:0007669"/>
    <property type="project" value="UniProtKB-KW"/>
</dbReference>
<dbReference type="GO" id="GO:0009252">
    <property type="term" value="P:peptidoglycan biosynthetic process"/>
    <property type="evidence" value="ECO:0007669"/>
    <property type="project" value="UniProtKB-UniRule"/>
</dbReference>
<dbReference type="GO" id="GO:0008360">
    <property type="term" value="P:regulation of cell shape"/>
    <property type="evidence" value="ECO:0007669"/>
    <property type="project" value="UniProtKB-KW"/>
</dbReference>
<dbReference type="FunFam" id="3.40.1190.10:FF:000001">
    <property type="entry name" value="UDP-N-acetylmuramate--L-alanine ligase"/>
    <property type="match status" value="1"/>
</dbReference>
<dbReference type="FunFam" id="3.40.50.720:FF:000046">
    <property type="entry name" value="UDP-N-acetylmuramate--L-alanine ligase"/>
    <property type="match status" value="1"/>
</dbReference>
<dbReference type="FunFam" id="3.90.190.20:FF:000001">
    <property type="entry name" value="UDP-N-acetylmuramate--L-alanine ligase"/>
    <property type="match status" value="1"/>
</dbReference>
<dbReference type="Gene3D" id="3.90.190.20">
    <property type="entry name" value="Mur ligase, C-terminal domain"/>
    <property type="match status" value="1"/>
</dbReference>
<dbReference type="Gene3D" id="3.40.1190.10">
    <property type="entry name" value="Mur-like, catalytic domain"/>
    <property type="match status" value="1"/>
</dbReference>
<dbReference type="Gene3D" id="3.40.50.720">
    <property type="entry name" value="NAD(P)-binding Rossmann-like Domain"/>
    <property type="match status" value="1"/>
</dbReference>
<dbReference type="HAMAP" id="MF_00046">
    <property type="entry name" value="MurC"/>
    <property type="match status" value="1"/>
</dbReference>
<dbReference type="InterPro" id="IPR036565">
    <property type="entry name" value="Mur-like_cat_sf"/>
</dbReference>
<dbReference type="InterPro" id="IPR004101">
    <property type="entry name" value="Mur_ligase_C"/>
</dbReference>
<dbReference type="InterPro" id="IPR036615">
    <property type="entry name" value="Mur_ligase_C_dom_sf"/>
</dbReference>
<dbReference type="InterPro" id="IPR013221">
    <property type="entry name" value="Mur_ligase_cen"/>
</dbReference>
<dbReference type="InterPro" id="IPR000713">
    <property type="entry name" value="Mur_ligase_N"/>
</dbReference>
<dbReference type="InterPro" id="IPR050061">
    <property type="entry name" value="MurCDEF_pg_biosynth"/>
</dbReference>
<dbReference type="InterPro" id="IPR005758">
    <property type="entry name" value="UDP-N-AcMur_Ala_ligase_MurC"/>
</dbReference>
<dbReference type="NCBIfam" id="TIGR01082">
    <property type="entry name" value="murC"/>
    <property type="match status" value="1"/>
</dbReference>
<dbReference type="PANTHER" id="PTHR43445:SF3">
    <property type="entry name" value="UDP-N-ACETYLMURAMATE--L-ALANINE LIGASE"/>
    <property type="match status" value="1"/>
</dbReference>
<dbReference type="PANTHER" id="PTHR43445">
    <property type="entry name" value="UDP-N-ACETYLMURAMATE--L-ALANINE LIGASE-RELATED"/>
    <property type="match status" value="1"/>
</dbReference>
<dbReference type="Pfam" id="PF01225">
    <property type="entry name" value="Mur_ligase"/>
    <property type="match status" value="1"/>
</dbReference>
<dbReference type="Pfam" id="PF02875">
    <property type="entry name" value="Mur_ligase_C"/>
    <property type="match status" value="1"/>
</dbReference>
<dbReference type="Pfam" id="PF08245">
    <property type="entry name" value="Mur_ligase_M"/>
    <property type="match status" value="1"/>
</dbReference>
<dbReference type="SUPFAM" id="SSF51984">
    <property type="entry name" value="MurCD N-terminal domain"/>
    <property type="match status" value="1"/>
</dbReference>
<dbReference type="SUPFAM" id="SSF53623">
    <property type="entry name" value="MurD-like peptide ligases, catalytic domain"/>
    <property type="match status" value="1"/>
</dbReference>
<dbReference type="SUPFAM" id="SSF53244">
    <property type="entry name" value="MurD-like peptide ligases, peptide-binding domain"/>
    <property type="match status" value="1"/>
</dbReference>
<evidence type="ECO:0000255" key="1">
    <source>
        <dbReference type="HAMAP-Rule" id="MF_00046"/>
    </source>
</evidence>
<name>MURC_ECOHS</name>
<feature type="chain" id="PRO_1000057316" description="UDP-N-acetylmuramate--L-alanine ligase">
    <location>
        <begin position="1"/>
        <end position="491"/>
    </location>
</feature>
<feature type="binding site" evidence="1">
    <location>
        <begin position="126"/>
        <end position="132"/>
    </location>
    <ligand>
        <name>ATP</name>
        <dbReference type="ChEBI" id="CHEBI:30616"/>
    </ligand>
</feature>
<sequence length="491" mass="53598">MNTQQLAKLRSIVPEMRRVRHIHFVGIGGAGMGGIAEVLANEGYQISGSDLAPNPVTQQLMNLGATIYFNHRPENVRDASVVVVSSAISADNPEIVAAHEARIPVIRRAEMLAELMRFRHGIAIAGTHGKTTTTAMVSSIYAEAGLDPTFVNGGLVKAAGVHARLGHGRYLIAEADESDASFLHLQPMVAIVTNIEADHMDTYQGDFENLKQTFINFLHNLPFYGRAVMCVDDPVIRELLPRVGRQTTTYGFSEDADVRVEDYQQIGPQGHFTLLRQDKEPMRVTLNAPGRHNALNAAAAVAVATEEGIDDEAILRALESFQGTGRRFDFLGEFPLEPVNGKSGTAMLVDDYGHHPTEVDATIKAARAGWPDKNLVMLFQPHRFTRTRDLYDDFANVLTQVDTLLMLEVYPAGEAPIPGADSRSLCRTIRGRGKIDPILVPDPAQVAEMLAPVLTGNDLILVQGAGNIGKIARSLAEIKLKPQTPEEEQHD</sequence>
<reference key="1">
    <citation type="journal article" date="2008" name="J. Bacteriol.">
        <title>The pangenome structure of Escherichia coli: comparative genomic analysis of E. coli commensal and pathogenic isolates.</title>
        <authorList>
            <person name="Rasko D.A."/>
            <person name="Rosovitz M.J."/>
            <person name="Myers G.S.A."/>
            <person name="Mongodin E.F."/>
            <person name="Fricke W.F."/>
            <person name="Gajer P."/>
            <person name="Crabtree J."/>
            <person name="Sebaihia M."/>
            <person name="Thomson N.R."/>
            <person name="Chaudhuri R."/>
            <person name="Henderson I.R."/>
            <person name="Sperandio V."/>
            <person name="Ravel J."/>
        </authorList>
    </citation>
    <scope>NUCLEOTIDE SEQUENCE [LARGE SCALE GENOMIC DNA]</scope>
    <source>
        <strain>HS</strain>
    </source>
</reference>
<gene>
    <name evidence="1" type="primary">murC</name>
    <name type="ordered locus">EcHS_A0097</name>
</gene>
<proteinExistence type="inferred from homology"/>
<organism>
    <name type="scientific">Escherichia coli O9:H4 (strain HS)</name>
    <dbReference type="NCBI Taxonomy" id="331112"/>
    <lineage>
        <taxon>Bacteria</taxon>
        <taxon>Pseudomonadati</taxon>
        <taxon>Pseudomonadota</taxon>
        <taxon>Gammaproteobacteria</taxon>
        <taxon>Enterobacterales</taxon>
        <taxon>Enterobacteriaceae</taxon>
        <taxon>Escherichia</taxon>
    </lineage>
</organism>
<keyword id="KW-0067">ATP-binding</keyword>
<keyword id="KW-0131">Cell cycle</keyword>
<keyword id="KW-0132">Cell division</keyword>
<keyword id="KW-0133">Cell shape</keyword>
<keyword id="KW-0961">Cell wall biogenesis/degradation</keyword>
<keyword id="KW-0963">Cytoplasm</keyword>
<keyword id="KW-0436">Ligase</keyword>
<keyword id="KW-0547">Nucleotide-binding</keyword>
<keyword id="KW-0573">Peptidoglycan synthesis</keyword>